<proteinExistence type="inferred from homology"/>
<accession>Q30ST0</accession>
<sequence>MYQTTIKKSVELVGIGLHKGSAVKLRLEPLESNSGLIFYRSDVDVAIPLLPANVVDTKMATVIGKDGYVISTIEHMLSAIYAYGIDNLKIIVNADEVPVMDGSSASFCMLLDEAGVVQLDVPKKIMRIKKEIIVQEGEKYVKLSPSTDLKYGFTIKFPHPVIQQQEYVLNFTKQNYKDEIARARTFGFLHEVQYLRSKGLALGGSLENAIVLDDKKVLNPEGLRFDDEFVRHKILDAIGDMALIGMNFVGNYEALAGSHDLNHKLTLELLKDAENYEVIELVDEKTKELEKAYA</sequence>
<name>LPXC_SULDN</name>
<feature type="chain" id="PRO_0000253700" description="UDP-3-O-acyl-N-acetylglucosamine deacetylase">
    <location>
        <begin position="1"/>
        <end position="294"/>
    </location>
</feature>
<feature type="active site" description="Proton donor" evidence="1">
    <location>
        <position position="259"/>
    </location>
</feature>
<feature type="binding site" evidence="1">
    <location>
        <position position="75"/>
    </location>
    <ligand>
        <name>Zn(2+)</name>
        <dbReference type="ChEBI" id="CHEBI:29105"/>
    </ligand>
</feature>
<feature type="binding site" evidence="1">
    <location>
        <position position="232"/>
    </location>
    <ligand>
        <name>Zn(2+)</name>
        <dbReference type="ChEBI" id="CHEBI:29105"/>
    </ligand>
</feature>
<feature type="binding site" evidence="1">
    <location>
        <position position="236"/>
    </location>
    <ligand>
        <name>Zn(2+)</name>
        <dbReference type="ChEBI" id="CHEBI:29105"/>
    </ligand>
</feature>
<keyword id="KW-0378">Hydrolase</keyword>
<keyword id="KW-0441">Lipid A biosynthesis</keyword>
<keyword id="KW-0444">Lipid biosynthesis</keyword>
<keyword id="KW-0443">Lipid metabolism</keyword>
<keyword id="KW-0479">Metal-binding</keyword>
<keyword id="KW-1185">Reference proteome</keyword>
<keyword id="KW-0862">Zinc</keyword>
<protein>
    <recommendedName>
        <fullName evidence="1">UDP-3-O-acyl-N-acetylglucosamine deacetylase</fullName>
        <shortName evidence="1">UDP-3-O-acyl-GlcNAc deacetylase</shortName>
        <ecNumber evidence="1">3.5.1.108</ecNumber>
    </recommendedName>
    <alternativeName>
        <fullName evidence="1">UDP-3-O-[R-3-hydroxymyristoyl]-N-acetylglucosamine deacetylase</fullName>
    </alternativeName>
</protein>
<evidence type="ECO:0000255" key="1">
    <source>
        <dbReference type="HAMAP-Rule" id="MF_00388"/>
    </source>
</evidence>
<organism>
    <name type="scientific">Sulfurimonas denitrificans (strain ATCC 33889 / DSM 1251)</name>
    <name type="common">Thiomicrospira denitrificans (strain ATCC 33889 / DSM 1251)</name>
    <dbReference type="NCBI Taxonomy" id="326298"/>
    <lineage>
        <taxon>Bacteria</taxon>
        <taxon>Pseudomonadati</taxon>
        <taxon>Campylobacterota</taxon>
        <taxon>Epsilonproteobacteria</taxon>
        <taxon>Campylobacterales</taxon>
        <taxon>Sulfurimonadaceae</taxon>
        <taxon>Sulfurimonas</taxon>
    </lineage>
</organism>
<reference key="1">
    <citation type="journal article" date="2008" name="Appl. Environ. Microbiol.">
        <title>Genome of the epsilonproteobacterial chemolithoautotroph Sulfurimonas denitrificans.</title>
        <authorList>
            <person name="Sievert S.M."/>
            <person name="Scott K.M."/>
            <person name="Klotz M.G."/>
            <person name="Chain P.S.G."/>
            <person name="Hauser L.J."/>
            <person name="Hemp J."/>
            <person name="Huegler M."/>
            <person name="Land M."/>
            <person name="Lapidus A."/>
            <person name="Larimer F.W."/>
            <person name="Lucas S."/>
            <person name="Malfatti S.A."/>
            <person name="Meyer F."/>
            <person name="Paulsen I.T."/>
            <person name="Ren Q."/>
            <person name="Simon J."/>
            <person name="Bailey K."/>
            <person name="Diaz E."/>
            <person name="Fitzpatrick K.A."/>
            <person name="Glover B."/>
            <person name="Gwatney N."/>
            <person name="Korajkic A."/>
            <person name="Long A."/>
            <person name="Mobberley J.M."/>
            <person name="Pantry S.N."/>
            <person name="Pazder G."/>
            <person name="Peterson S."/>
            <person name="Quintanilla J.D."/>
            <person name="Sprinkle R."/>
            <person name="Stephens J."/>
            <person name="Thomas P."/>
            <person name="Vaughn R."/>
            <person name="Weber M.J."/>
            <person name="Wooten L.L."/>
        </authorList>
    </citation>
    <scope>NUCLEOTIDE SEQUENCE [LARGE SCALE GENOMIC DNA]</scope>
    <source>
        <strain>ATCC 33889 / DSM 1251</strain>
    </source>
</reference>
<gene>
    <name evidence="1" type="primary">lpxC</name>
    <name type="ordered locus">Suden_0672</name>
</gene>
<comment type="function">
    <text evidence="1">Catalyzes the hydrolysis of UDP-3-O-myristoyl-N-acetylglucosamine to form UDP-3-O-myristoylglucosamine and acetate, the committed step in lipid A biosynthesis.</text>
</comment>
<comment type="catalytic activity">
    <reaction evidence="1">
        <text>a UDP-3-O-[(3R)-3-hydroxyacyl]-N-acetyl-alpha-D-glucosamine + H2O = a UDP-3-O-[(3R)-3-hydroxyacyl]-alpha-D-glucosamine + acetate</text>
        <dbReference type="Rhea" id="RHEA:67816"/>
        <dbReference type="ChEBI" id="CHEBI:15377"/>
        <dbReference type="ChEBI" id="CHEBI:30089"/>
        <dbReference type="ChEBI" id="CHEBI:137740"/>
        <dbReference type="ChEBI" id="CHEBI:173225"/>
        <dbReference type="EC" id="3.5.1.108"/>
    </reaction>
</comment>
<comment type="cofactor">
    <cofactor evidence="1">
        <name>Zn(2+)</name>
        <dbReference type="ChEBI" id="CHEBI:29105"/>
    </cofactor>
</comment>
<comment type="pathway">
    <text evidence="1">Glycolipid biosynthesis; lipid IV(A) biosynthesis; lipid IV(A) from (3R)-3-hydroxytetradecanoyl-[acyl-carrier-protein] and UDP-N-acetyl-alpha-D-glucosamine: step 2/6.</text>
</comment>
<comment type="similarity">
    <text evidence="1">Belongs to the LpxC family.</text>
</comment>
<dbReference type="EC" id="3.5.1.108" evidence="1"/>
<dbReference type="EMBL" id="CP000153">
    <property type="protein sequence ID" value="ABB43951.1"/>
    <property type="molecule type" value="Genomic_DNA"/>
</dbReference>
<dbReference type="RefSeq" id="WP_011372305.1">
    <property type="nucleotide sequence ID" value="NC_007575.1"/>
</dbReference>
<dbReference type="SMR" id="Q30ST0"/>
<dbReference type="STRING" id="326298.Suden_0672"/>
<dbReference type="KEGG" id="tdn:Suden_0672"/>
<dbReference type="eggNOG" id="COG0774">
    <property type="taxonomic scope" value="Bacteria"/>
</dbReference>
<dbReference type="HOGENOM" id="CLU_046528_1_0_7"/>
<dbReference type="OrthoDB" id="9802746at2"/>
<dbReference type="UniPathway" id="UPA00359">
    <property type="reaction ID" value="UER00478"/>
</dbReference>
<dbReference type="Proteomes" id="UP000002714">
    <property type="component" value="Chromosome"/>
</dbReference>
<dbReference type="GO" id="GO:0016020">
    <property type="term" value="C:membrane"/>
    <property type="evidence" value="ECO:0007669"/>
    <property type="project" value="GOC"/>
</dbReference>
<dbReference type="GO" id="GO:0046872">
    <property type="term" value="F:metal ion binding"/>
    <property type="evidence" value="ECO:0007669"/>
    <property type="project" value="UniProtKB-KW"/>
</dbReference>
<dbReference type="GO" id="GO:0103117">
    <property type="term" value="F:UDP-3-O-acyl-N-acetylglucosamine deacetylase activity"/>
    <property type="evidence" value="ECO:0007669"/>
    <property type="project" value="UniProtKB-UniRule"/>
</dbReference>
<dbReference type="GO" id="GO:0009245">
    <property type="term" value="P:lipid A biosynthetic process"/>
    <property type="evidence" value="ECO:0007669"/>
    <property type="project" value="UniProtKB-UniRule"/>
</dbReference>
<dbReference type="Gene3D" id="3.30.230.20">
    <property type="entry name" value="lpxc deacetylase, domain 1"/>
    <property type="match status" value="1"/>
</dbReference>
<dbReference type="Gene3D" id="3.30.1700.10">
    <property type="entry name" value="lpxc deacetylase, domain 2"/>
    <property type="match status" value="1"/>
</dbReference>
<dbReference type="HAMAP" id="MF_00388">
    <property type="entry name" value="LpxC"/>
    <property type="match status" value="1"/>
</dbReference>
<dbReference type="InterPro" id="IPR020568">
    <property type="entry name" value="Ribosomal_Su5_D2-typ_SF"/>
</dbReference>
<dbReference type="InterPro" id="IPR004463">
    <property type="entry name" value="UDP-acyl_GlcNac_deAcase"/>
</dbReference>
<dbReference type="InterPro" id="IPR011334">
    <property type="entry name" value="UDP-acyl_GlcNac_deAcase_C"/>
</dbReference>
<dbReference type="InterPro" id="IPR015870">
    <property type="entry name" value="UDP-acyl_N-AcGlcN_deAcase_N"/>
</dbReference>
<dbReference type="NCBIfam" id="TIGR00325">
    <property type="entry name" value="lpxC"/>
    <property type="match status" value="1"/>
</dbReference>
<dbReference type="PANTHER" id="PTHR33694">
    <property type="entry name" value="UDP-3-O-ACYL-N-ACETYLGLUCOSAMINE DEACETYLASE 1, MITOCHONDRIAL-RELATED"/>
    <property type="match status" value="1"/>
</dbReference>
<dbReference type="PANTHER" id="PTHR33694:SF1">
    <property type="entry name" value="UDP-3-O-ACYL-N-ACETYLGLUCOSAMINE DEACETYLASE 1, MITOCHONDRIAL-RELATED"/>
    <property type="match status" value="1"/>
</dbReference>
<dbReference type="Pfam" id="PF03331">
    <property type="entry name" value="LpxC"/>
    <property type="match status" value="1"/>
</dbReference>
<dbReference type="SUPFAM" id="SSF54211">
    <property type="entry name" value="Ribosomal protein S5 domain 2-like"/>
    <property type="match status" value="2"/>
</dbReference>